<gene>
    <name evidence="1" type="primary">fmt</name>
    <name type="ordered locus">CTLon_0787</name>
</gene>
<proteinExistence type="inferred from homology"/>
<evidence type="ECO:0000255" key="1">
    <source>
        <dbReference type="HAMAP-Rule" id="MF_00182"/>
    </source>
</evidence>
<keyword id="KW-0648">Protein biosynthesis</keyword>
<keyword id="KW-0808">Transferase</keyword>
<comment type="function">
    <text evidence="1">Attaches a formyl group to the free amino group of methionyl-tRNA(fMet). The formyl group appears to play a dual role in the initiator identity of N-formylmethionyl-tRNA by promoting its recognition by IF2 and preventing the misappropriation of this tRNA by the elongation apparatus.</text>
</comment>
<comment type="catalytic activity">
    <reaction evidence="1">
        <text>L-methionyl-tRNA(fMet) + (6R)-10-formyltetrahydrofolate = N-formyl-L-methionyl-tRNA(fMet) + (6S)-5,6,7,8-tetrahydrofolate + H(+)</text>
        <dbReference type="Rhea" id="RHEA:24380"/>
        <dbReference type="Rhea" id="RHEA-COMP:9952"/>
        <dbReference type="Rhea" id="RHEA-COMP:9953"/>
        <dbReference type="ChEBI" id="CHEBI:15378"/>
        <dbReference type="ChEBI" id="CHEBI:57453"/>
        <dbReference type="ChEBI" id="CHEBI:78530"/>
        <dbReference type="ChEBI" id="CHEBI:78844"/>
        <dbReference type="ChEBI" id="CHEBI:195366"/>
        <dbReference type="EC" id="2.1.2.9"/>
    </reaction>
</comment>
<comment type="similarity">
    <text evidence="1">Belongs to the Fmt family.</text>
</comment>
<accession>B0B9Y3</accession>
<reference key="1">
    <citation type="journal article" date="2008" name="Genome Res.">
        <title>Chlamydia trachomatis: genome sequence analysis of lymphogranuloma venereum isolates.</title>
        <authorList>
            <person name="Thomson N.R."/>
            <person name="Holden M.T.G."/>
            <person name="Carder C."/>
            <person name="Lennard N."/>
            <person name="Lockey S.J."/>
            <person name="Marsh P."/>
            <person name="Skipp P."/>
            <person name="O'Connor C.D."/>
            <person name="Goodhead I."/>
            <person name="Norbertzcak H."/>
            <person name="Harris B."/>
            <person name="Ormond D."/>
            <person name="Rance R."/>
            <person name="Quail M.A."/>
            <person name="Parkhill J."/>
            <person name="Stephens R.S."/>
            <person name="Clarke I.N."/>
        </authorList>
    </citation>
    <scope>NUCLEOTIDE SEQUENCE [LARGE SCALE GENOMIC DNA]</scope>
    <source>
        <strain>UCH-1/proctitis</strain>
    </source>
</reference>
<name>FMT_CHLTB</name>
<dbReference type="EC" id="2.1.2.9" evidence="1"/>
<dbReference type="EMBL" id="AM884177">
    <property type="protein sequence ID" value="CAP07184.1"/>
    <property type="molecule type" value="Genomic_DNA"/>
</dbReference>
<dbReference type="RefSeq" id="WP_009872729.1">
    <property type="nucleotide sequence ID" value="NC_010280.2"/>
</dbReference>
<dbReference type="SMR" id="B0B9Y3"/>
<dbReference type="KEGG" id="ctl:CTLon_0787"/>
<dbReference type="HOGENOM" id="CLU_033347_1_1_0"/>
<dbReference type="Proteomes" id="UP001154401">
    <property type="component" value="Chromosome"/>
</dbReference>
<dbReference type="GO" id="GO:0005829">
    <property type="term" value="C:cytosol"/>
    <property type="evidence" value="ECO:0007669"/>
    <property type="project" value="TreeGrafter"/>
</dbReference>
<dbReference type="GO" id="GO:0004479">
    <property type="term" value="F:methionyl-tRNA formyltransferase activity"/>
    <property type="evidence" value="ECO:0007669"/>
    <property type="project" value="UniProtKB-UniRule"/>
</dbReference>
<dbReference type="CDD" id="cd08646">
    <property type="entry name" value="FMT_core_Met-tRNA-FMT_N"/>
    <property type="match status" value="1"/>
</dbReference>
<dbReference type="CDD" id="cd08704">
    <property type="entry name" value="Met_tRNA_FMT_C"/>
    <property type="match status" value="1"/>
</dbReference>
<dbReference type="Gene3D" id="3.10.25.10">
    <property type="entry name" value="Formyl transferase, C-terminal domain"/>
    <property type="match status" value="1"/>
</dbReference>
<dbReference type="Gene3D" id="3.40.50.170">
    <property type="entry name" value="Formyl transferase, N-terminal domain"/>
    <property type="match status" value="1"/>
</dbReference>
<dbReference type="HAMAP" id="MF_00182">
    <property type="entry name" value="Formyl_trans"/>
    <property type="match status" value="1"/>
</dbReference>
<dbReference type="InterPro" id="IPR005794">
    <property type="entry name" value="Fmt"/>
</dbReference>
<dbReference type="InterPro" id="IPR005793">
    <property type="entry name" value="Formyl_trans_C"/>
</dbReference>
<dbReference type="InterPro" id="IPR037022">
    <property type="entry name" value="Formyl_trans_C_sf"/>
</dbReference>
<dbReference type="InterPro" id="IPR002376">
    <property type="entry name" value="Formyl_transf_N"/>
</dbReference>
<dbReference type="InterPro" id="IPR036477">
    <property type="entry name" value="Formyl_transf_N_sf"/>
</dbReference>
<dbReference type="InterPro" id="IPR011034">
    <property type="entry name" value="Formyl_transferase-like_C_sf"/>
</dbReference>
<dbReference type="InterPro" id="IPR001555">
    <property type="entry name" value="GART_AS"/>
</dbReference>
<dbReference type="InterPro" id="IPR044135">
    <property type="entry name" value="Met-tRNA-FMT_C"/>
</dbReference>
<dbReference type="InterPro" id="IPR041711">
    <property type="entry name" value="Met-tRNA-FMT_N"/>
</dbReference>
<dbReference type="NCBIfam" id="TIGR00460">
    <property type="entry name" value="fmt"/>
    <property type="match status" value="1"/>
</dbReference>
<dbReference type="PANTHER" id="PTHR11138">
    <property type="entry name" value="METHIONYL-TRNA FORMYLTRANSFERASE"/>
    <property type="match status" value="1"/>
</dbReference>
<dbReference type="PANTHER" id="PTHR11138:SF5">
    <property type="entry name" value="METHIONYL-TRNA FORMYLTRANSFERASE, MITOCHONDRIAL"/>
    <property type="match status" value="1"/>
</dbReference>
<dbReference type="Pfam" id="PF02911">
    <property type="entry name" value="Formyl_trans_C"/>
    <property type="match status" value="1"/>
</dbReference>
<dbReference type="Pfam" id="PF00551">
    <property type="entry name" value="Formyl_trans_N"/>
    <property type="match status" value="1"/>
</dbReference>
<dbReference type="SUPFAM" id="SSF50486">
    <property type="entry name" value="FMT C-terminal domain-like"/>
    <property type="match status" value="1"/>
</dbReference>
<dbReference type="SUPFAM" id="SSF53328">
    <property type="entry name" value="Formyltransferase"/>
    <property type="match status" value="1"/>
</dbReference>
<dbReference type="PROSITE" id="PS00373">
    <property type="entry name" value="GART"/>
    <property type="match status" value="1"/>
</dbReference>
<feature type="chain" id="PRO_1000098392" description="Methionyl-tRNA formyltransferase">
    <location>
        <begin position="1"/>
        <end position="316"/>
    </location>
</feature>
<feature type="binding site" evidence="1">
    <location>
        <begin position="111"/>
        <end position="114"/>
    </location>
    <ligand>
        <name>(6S)-5,6,7,8-tetrahydrofolate</name>
        <dbReference type="ChEBI" id="CHEBI:57453"/>
    </ligand>
</feature>
<protein>
    <recommendedName>
        <fullName evidence="1">Methionyl-tRNA formyltransferase</fullName>
        <ecNumber evidence="1">2.1.2.9</ecNumber>
    </recommendedName>
</protein>
<organism>
    <name type="scientific">Chlamydia trachomatis serovar L2b (strain UCH-1/proctitis)</name>
    <dbReference type="NCBI Taxonomy" id="471473"/>
    <lineage>
        <taxon>Bacteria</taxon>
        <taxon>Pseudomonadati</taxon>
        <taxon>Chlamydiota</taxon>
        <taxon>Chlamydiia</taxon>
        <taxon>Chlamydiales</taxon>
        <taxon>Chlamydiaceae</taxon>
        <taxon>Chlamydia/Chlamydophila group</taxon>
        <taxon>Chlamydia</taxon>
    </lineage>
</organism>
<sequence length="316" mass="33920">MSLRVVYLGTPQFAATVLKTLLDAHTHIVGVVTRADKPQKRSSKLISSPVKQLALSKNIPLLQPIKTTDPAFLAQLREWQADVFIVVAYGVILKQELLDIPTYGCYNLHAGLLPAYRGAAPIQRCIMDGGVLSGNTVIRMDAGMDTGDIANVNYVAIGEDMTAGGLAEALAASGGELLLKTLQEIEAGTVRHVPQNEAMATLAPKLTKEEGGIHWDAPASQVYAHIRGVSPAPGAWTRYLSQGKEARRLGVLSARMESFSGNYGDPGEVLGVSGEDLLIACRQGALRLRMVQPEGKASMKAKDFFNGQSRLVSKLF</sequence>